<protein>
    <recommendedName>
        <fullName evidence="1">UPF0434 protein Mnod_1613</fullName>
    </recommendedName>
</protein>
<reference key="1">
    <citation type="submission" date="2009-01" db="EMBL/GenBank/DDBJ databases">
        <title>Complete sequence of chromosome of Methylobacterium nodulans ORS 2060.</title>
        <authorList>
            <consortium name="US DOE Joint Genome Institute"/>
            <person name="Lucas S."/>
            <person name="Copeland A."/>
            <person name="Lapidus A."/>
            <person name="Glavina del Rio T."/>
            <person name="Dalin E."/>
            <person name="Tice H."/>
            <person name="Bruce D."/>
            <person name="Goodwin L."/>
            <person name="Pitluck S."/>
            <person name="Sims D."/>
            <person name="Brettin T."/>
            <person name="Detter J.C."/>
            <person name="Han C."/>
            <person name="Larimer F."/>
            <person name="Land M."/>
            <person name="Hauser L."/>
            <person name="Kyrpides N."/>
            <person name="Ivanova N."/>
            <person name="Marx C.J."/>
            <person name="Richardson P."/>
        </authorList>
    </citation>
    <scope>NUCLEOTIDE SEQUENCE [LARGE SCALE GENOMIC DNA]</scope>
    <source>
        <strain>LMG 21967 / CNCM I-2342 / ORS 2060</strain>
    </source>
</reference>
<organism>
    <name type="scientific">Methylobacterium nodulans (strain LMG 21967 / CNCM I-2342 / ORS 2060)</name>
    <dbReference type="NCBI Taxonomy" id="460265"/>
    <lineage>
        <taxon>Bacteria</taxon>
        <taxon>Pseudomonadati</taxon>
        <taxon>Pseudomonadota</taxon>
        <taxon>Alphaproteobacteria</taxon>
        <taxon>Hyphomicrobiales</taxon>
        <taxon>Methylobacteriaceae</taxon>
        <taxon>Methylobacterium</taxon>
    </lineage>
</organism>
<sequence length="66" mass="7405">MADMPSVEPTRIDPKLLELLVCPLTKGRLEYDSARQELISRSAKLAYPIRDGIPIMLPEEARPLAD</sequence>
<gene>
    <name type="ordered locus">Mnod_1613</name>
</gene>
<accession>B8IPV3</accession>
<proteinExistence type="inferred from homology"/>
<evidence type="ECO:0000255" key="1">
    <source>
        <dbReference type="HAMAP-Rule" id="MF_01187"/>
    </source>
</evidence>
<dbReference type="EMBL" id="CP001349">
    <property type="protein sequence ID" value="ACL56603.1"/>
    <property type="molecule type" value="Genomic_DNA"/>
</dbReference>
<dbReference type="RefSeq" id="WP_015928298.1">
    <property type="nucleotide sequence ID" value="NC_011894.1"/>
</dbReference>
<dbReference type="SMR" id="B8IPV3"/>
<dbReference type="STRING" id="460265.Mnod_1613"/>
<dbReference type="KEGG" id="mno:Mnod_1613"/>
<dbReference type="eggNOG" id="COG2835">
    <property type="taxonomic scope" value="Bacteria"/>
</dbReference>
<dbReference type="HOGENOM" id="CLU_155659_2_2_5"/>
<dbReference type="OrthoDB" id="9812205at2"/>
<dbReference type="Proteomes" id="UP000008207">
    <property type="component" value="Chromosome"/>
</dbReference>
<dbReference type="GO" id="GO:0005829">
    <property type="term" value="C:cytosol"/>
    <property type="evidence" value="ECO:0007669"/>
    <property type="project" value="TreeGrafter"/>
</dbReference>
<dbReference type="FunFam" id="2.20.25.10:FF:000002">
    <property type="entry name" value="UPF0434 protein YcaR"/>
    <property type="match status" value="1"/>
</dbReference>
<dbReference type="Gene3D" id="2.20.25.10">
    <property type="match status" value="1"/>
</dbReference>
<dbReference type="HAMAP" id="MF_01187">
    <property type="entry name" value="UPF0434"/>
    <property type="match status" value="1"/>
</dbReference>
<dbReference type="InterPro" id="IPR005651">
    <property type="entry name" value="Trm112-like"/>
</dbReference>
<dbReference type="PANTHER" id="PTHR33505:SF4">
    <property type="entry name" value="PROTEIN PREY, MITOCHONDRIAL"/>
    <property type="match status" value="1"/>
</dbReference>
<dbReference type="PANTHER" id="PTHR33505">
    <property type="entry name" value="ZGC:162634"/>
    <property type="match status" value="1"/>
</dbReference>
<dbReference type="Pfam" id="PF03966">
    <property type="entry name" value="Trm112p"/>
    <property type="match status" value="1"/>
</dbReference>
<dbReference type="SUPFAM" id="SSF158997">
    <property type="entry name" value="Trm112p-like"/>
    <property type="match status" value="1"/>
</dbReference>
<feature type="chain" id="PRO_1000164486" description="UPF0434 protein Mnod_1613">
    <location>
        <begin position="1"/>
        <end position="66"/>
    </location>
</feature>
<name>Y1613_METNO</name>
<keyword id="KW-1185">Reference proteome</keyword>
<comment type="similarity">
    <text evidence="1">Belongs to the UPF0434 family.</text>
</comment>